<keyword id="KW-0175">Coiled coil</keyword>
<keyword id="KW-0256">Endoplasmic reticulum</keyword>
<keyword id="KW-0472">Membrane</keyword>
<keyword id="KW-0479">Metal-binding</keyword>
<keyword id="KW-0597">Phosphoprotein</keyword>
<keyword id="KW-1185">Reference proteome</keyword>
<keyword id="KW-0812">Transmembrane</keyword>
<keyword id="KW-1133">Transmembrane helix</keyword>
<keyword id="KW-0862">Zinc</keyword>
<keyword id="KW-0863">Zinc-finger</keyword>
<accession>Q28HF6</accession>
<accession>Q5FW43</accession>
<reference key="1">
    <citation type="submission" date="2006-06" db="EMBL/GenBank/DDBJ databases">
        <authorList>
            <consortium name="Sanger Xenopus tropicalis EST/cDNA project"/>
        </authorList>
    </citation>
    <scope>NUCLEOTIDE SEQUENCE [LARGE SCALE MRNA]</scope>
    <source>
        <tissue>Egg</tissue>
    </source>
</reference>
<reference key="2">
    <citation type="submission" date="2005-02" db="EMBL/GenBank/DDBJ databases">
        <authorList>
            <consortium name="NIH - Xenopus Gene Collection (XGC) project"/>
        </authorList>
    </citation>
    <scope>NUCLEOTIDE SEQUENCE [LARGE SCALE MRNA]</scope>
</reference>
<proteinExistence type="evidence at transcript level"/>
<feature type="chain" id="PRO_0000248318" description="Endoplasmic reticulum junction formation protein lunapark">
    <location>
        <begin position="1"/>
        <end position="423"/>
    </location>
</feature>
<feature type="topological domain" description="Cytoplasmic" evidence="3">
    <location>
        <begin position="1"/>
        <end position="45"/>
    </location>
</feature>
<feature type="transmembrane region" description="Helical" evidence="4">
    <location>
        <begin position="46"/>
        <end position="66"/>
    </location>
</feature>
<feature type="topological domain" description="Lumenal" evidence="3">
    <location>
        <begin position="67"/>
        <end position="77"/>
    </location>
</feature>
<feature type="transmembrane region" description="Helical" evidence="4">
    <location>
        <begin position="78"/>
        <end position="98"/>
    </location>
</feature>
<feature type="topological domain" description="Cytoplasmic" evidence="3">
    <location>
        <begin position="99"/>
        <end position="423"/>
    </location>
</feature>
<feature type="zinc finger region" description="C4-type; plays a role in ER morphology" evidence="3">
    <location>
        <begin position="280"/>
        <end position="305"/>
    </location>
</feature>
<feature type="region of interest" description="Disordered" evidence="5">
    <location>
        <begin position="147"/>
        <end position="169"/>
    </location>
</feature>
<feature type="region of interest" description="Disordered" evidence="5">
    <location>
        <begin position="200"/>
        <end position="247"/>
    </location>
</feature>
<feature type="region of interest" description="Disordered" evidence="5">
    <location>
        <begin position="318"/>
        <end position="423"/>
    </location>
</feature>
<feature type="coiled-coil region" evidence="4">
    <location>
        <begin position="16"/>
        <end position="40"/>
    </location>
</feature>
<feature type="coiled-coil region" evidence="4">
    <location>
        <begin position="101"/>
        <end position="128"/>
    </location>
</feature>
<feature type="compositionally biased region" description="Polar residues" evidence="5">
    <location>
        <begin position="216"/>
        <end position="225"/>
    </location>
</feature>
<feature type="compositionally biased region" description="Polar residues" evidence="5">
    <location>
        <begin position="334"/>
        <end position="343"/>
    </location>
</feature>
<feature type="compositionally biased region" description="Acidic residues" evidence="5">
    <location>
        <begin position="370"/>
        <end position="391"/>
    </location>
</feature>
<feature type="compositionally biased region" description="Acidic residues" evidence="5">
    <location>
        <begin position="414"/>
        <end position="423"/>
    </location>
</feature>
<feature type="modified residue" description="Phosphothreonine" evidence="1">
    <location>
        <position position="159"/>
    </location>
</feature>
<feature type="modified residue" description="Phosphoserine" evidence="1">
    <location>
        <position position="177"/>
    </location>
</feature>
<feature type="modified residue" description="Phosphoserine" evidence="1">
    <location>
        <position position="179"/>
    </location>
</feature>
<feature type="modified residue" description="Phosphoserine" evidence="1">
    <location>
        <position position="188"/>
    </location>
</feature>
<feature type="modified residue" description="Phosphothreonine" evidence="1">
    <location>
        <position position="198"/>
    </location>
</feature>
<feature type="modified residue" description="Phosphoserine" evidence="1">
    <location>
        <position position="206"/>
    </location>
</feature>
<feature type="modified residue" description="Phosphoserine" evidence="1">
    <location>
        <position position="215"/>
    </location>
</feature>
<feature type="modified residue" description="Phosphothreonine" evidence="1">
    <location>
        <position position="219"/>
    </location>
</feature>
<feature type="modified residue" description="Phosphoserine" evidence="1">
    <location>
        <position position="222"/>
    </location>
</feature>
<feature type="modified residue" description="Phosphoserine" evidence="1">
    <location>
        <position position="231"/>
    </location>
</feature>
<feature type="sequence conflict" description="In Ref. 2; AAH89636." evidence="6" ref="2">
    <original>N</original>
    <variation>S</variation>
    <location>
        <position position="413"/>
    </location>
</feature>
<comment type="function">
    <text evidence="2 3">Endoplasmic reticulum (ER)-shaping membrane protein that plays a role in determining ER morphology. Involved in the stabilization of nascent three-way ER tubular junctions within the ER network. May also play a role as a curvature-stabilizing protein within three-way ER tubular junction network (By similarity).</text>
</comment>
<comment type="subunit">
    <text evidence="1">Homodimer; homodimerization requires the C4-type zinc finger motif and decreases during mitosis in a phosphorylation-dependent manner.</text>
</comment>
<comment type="subcellular location">
    <subcellularLocation>
        <location evidence="3">Endoplasmic reticulum membrane</location>
        <topology evidence="3">Multi-pass membrane protein</topology>
        <orientation evidence="3">Cytoplasmic side</orientation>
    </subcellularLocation>
    <text evidence="3">Localizes at endoplasmic reticulum (ER) three-way tubular junctions, which represent crossing-points at which the tubules build a polygonal network.</text>
</comment>
<comment type="domain">
    <text evidence="3">The transmembrane domain 1 and 2 function as a signal-anchor and stop-transfer sequence, respectively, generating a double-spanning integral membrane protein with a N- and C-terminal cytoplasmic orientation. Transmembrane domain 1 and 2 are probably sufficient to mediate membrane translocation and topology formation in a N-myristoylation-independent manner. Transmembrane domain 2 is sufficient to block the protein secretion pathway. The two coiled-coil domains are necessary for its endoplasmic reticulum (ER) three-way tubular junction localization. The C4-type zinc finger motif is necessary both for its ER three-way tubular junction localization and formation.</text>
</comment>
<comment type="PTM">
    <text evidence="1">Phosphorylated. Phosphorylation at Thr-159 occurs during interphase. Phosphorylation at Ser-177, Ser-179, Ser-188, Thr-198, Ser-206, Ser-215, Thr-219, Ser-222 and Ser-231 occurs during mitosis; these phosphorylations reduce both its homodimerization and the ER three-way tubular junction formation.</text>
</comment>
<comment type="similarity">
    <text evidence="6">Belongs to the lunapark family.</text>
</comment>
<evidence type="ECO:0000250" key="1">
    <source>
        <dbReference type="UniProtKB" id="Q6DFJ8"/>
    </source>
</evidence>
<evidence type="ECO:0000250" key="2">
    <source>
        <dbReference type="UniProtKB" id="Q7TQ95"/>
    </source>
</evidence>
<evidence type="ECO:0000250" key="3">
    <source>
        <dbReference type="UniProtKB" id="Q9C0E8"/>
    </source>
</evidence>
<evidence type="ECO:0000255" key="4"/>
<evidence type="ECO:0000256" key="5">
    <source>
        <dbReference type="SAM" id="MobiDB-lite"/>
    </source>
</evidence>
<evidence type="ECO:0000305" key="6"/>
<organism>
    <name type="scientific">Xenopus tropicalis</name>
    <name type="common">Western clawed frog</name>
    <name type="synonym">Silurana tropicalis</name>
    <dbReference type="NCBI Taxonomy" id="8364"/>
    <lineage>
        <taxon>Eukaryota</taxon>
        <taxon>Metazoa</taxon>
        <taxon>Chordata</taxon>
        <taxon>Craniata</taxon>
        <taxon>Vertebrata</taxon>
        <taxon>Euteleostomi</taxon>
        <taxon>Amphibia</taxon>
        <taxon>Batrachia</taxon>
        <taxon>Anura</taxon>
        <taxon>Pipoidea</taxon>
        <taxon>Pipidae</taxon>
        <taxon>Xenopodinae</taxon>
        <taxon>Xenopus</taxon>
        <taxon>Silurana</taxon>
    </lineage>
</organism>
<dbReference type="EMBL" id="CR760905">
    <property type="protein sequence ID" value="CAJ83652.1"/>
    <property type="molecule type" value="mRNA"/>
</dbReference>
<dbReference type="EMBL" id="BC089636">
    <property type="protein sequence ID" value="AAH89636.1"/>
    <property type="molecule type" value="mRNA"/>
</dbReference>
<dbReference type="RefSeq" id="NP_001016474.1">
    <property type="nucleotide sequence ID" value="NM_001016474.3"/>
</dbReference>
<dbReference type="RefSeq" id="XP_012825883.2">
    <property type="nucleotide sequence ID" value="XM_012970429.3"/>
</dbReference>
<dbReference type="RefSeq" id="XP_012825884.2">
    <property type="nucleotide sequence ID" value="XM_012970430.3"/>
</dbReference>
<dbReference type="FunCoup" id="Q28HF6">
    <property type="interactions" value="2529"/>
</dbReference>
<dbReference type="STRING" id="8364.ENSXETP00000051057"/>
<dbReference type="PaxDb" id="8364-ENSXETP00000016481"/>
<dbReference type="GeneID" id="549228"/>
<dbReference type="KEGG" id="xtr:549228"/>
<dbReference type="AGR" id="Xenbase:XB-GENE-972741"/>
<dbReference type="CTD" id="80856"/>
<dbReference type="Xenbase" id="XB-GENE-972741">
    <property type="gene designation" value="lnpk"/>
</dbReference>
<dbReference type="eggNOG" id="KOG2846">
    <property type="taxonomic scope" value="Eukaryota"/>
</dbReference>
<dbReference type="HOGENOM" id="CLU_036951_0_0_1"/>
<dbReference type="InParanoid" id="Q28HF6"/>
<dbReference type="OMA" id="CGYFNPS"/>
<dbReference type="OrthoDB" id="1725934at2759"/>
<dbReference type="PhylomeDB" id="Q28HF6"/>
<dbReference type="TreeFam" id="TF315086"/>
<dbReference type="Proteomes" id="UP000008143">
    <property type="component" value="Chromosome 9"/>
</dbReference>
<dbReference type="Bgee" id="ENSXETG00000007570">
    <property type="expression patterns" value="Expressed in 4-cell stage embryo and 14 other cell types or tissues"/>
</dbReference>
<dbReference type="GO" id="GO:0005789">
    <property type="term" value="C:endoplasmic reticulum membrane"/>
    <property type="evidence" value="ECO:0000250"/>
    <property type="project" value="UniProtKB"/>
</dbReference>
<dbReference type="GO" id="GO:0098826">
    <property type="term" value="C:endoplasmic reticulum tubular network membrane"/>
    <property type="evidence" value="ECO:0000250"/>
    <property type="project" value="UniProtKB"/>
</dbReference>
<dbReference type="GO" id="GO:0042802">
    <property type="term" value="F:identical protein binding"/>
    <property type="evidence" value="ECO:0000250"/>
    <property type="project" value="UniProtKB"/>
</dbReference>
<dbReference type="GO" id="GO:0008270">
    <property type="term" value="F:zinc ion binding"/>
    <property type="evidence" value="ECO:0007669"/>
    <property type="project" value="UniProtKB-KW"/>
</dbReference>
<dbReference type="GO" id="GO:0071788">
    <property type="term" value="P:endoplasmic reticulum tubular network maintenance"/>
    <property type="evidence" value="ECO:0000250"/>
    <property type="project" value="UniProtKB"/>
</dbReference>
<dbReference type="GO" id="GO:1903373">
    <property type="term" value="P:positive regulation of endoplasmic reticulum tubular network organization"/>
    <property type="evidence" value="ECO:0000250"/>
    <property type="project" value="UniProtKB"/>
</dbReference>
<dbReference type="InterPro" id="IPR040115">
    <property type="entry name" value="Lnp"/>
</dbReference>
<dbReference type="InterPro" id="IPR019273">
    <property type="entry name" value="Lunapark_Znf"/>
</dbReference>
<dbReference type="PANTHER" id="PTHR22166">
    <property type="entry name" value="ENDOPLASMIC RETICULUM JUNCTION FORMATION PROTEIN LUNAPARK"/>
    <property type="match status" value="1"/>
</dbReference>
<dbReference type="PANTHER" id="PTHR22166:SF12">
    <property type="entry name" value="ENDOPLASMIC RETICULUM JUNCTION FORMATION PROTEIN LUNAPARK"/>
    <property type="match status" value="1"/>
</dbReference>
<dbReference type="Pfam" id="PF10058">
    <property type="entry name" value="Zn_ribbon_10"/>
    <property type="match status" value="1"/>
</dbReference>
<sequence length="423" mass="47873">MGALLAKWRAKPSTVEVLEKMEKDIQSLEEFRDKNQKLRKIWVARLFFYSTILYILTSLTVYLWYLPDGMTARLLTMLLFLSFPVLIWFVRTLLILWFSRRTERNNDALELLKTEKKKILEEVMEKETYKAAKLILERFDPDSRKIKELELPVPGPPITPRPGQDLRQRTAAQRNISVSTPVNPGQESPQVPGLLAATPSLQRDTSAPGGPPERSVQPTPQSNILQRRPGSPATTVSGMAIHPPGPPLARPILPRERGAMDRVIEYLVGDGPQNRYALICQQCFSHNGMALKEEFEYVAFRCAYCYFLNPARKTRPQAPRLQEINFDRQRQRTDSQGSVSSVQPPAAEQLENPQSPEAMEEDSPAQAEEQAIEEDSTCSEQQWEEAPDDSEKDPSPVAELNPSESNPSPPAANETEESFMETE</sequence>
<gene>
    <name type="primary">lnpk</name>
    <name type="synonym">lnp</name>
    <name type="ORF">TEgg059h15.1</name>
</gene>
<name>LNP_XENTR</name>
<protein>
    <recommendedName>
        <fullName evidence="6">Endoplasmic reticulum junction formation protein lunapark</fullName>
    </recommendedName>
    <alternativeName>
        <fullName evidence="3">ER junction formation factor lunapark</fullName>
    </alternativeName>
</protein>